<feature type="chain" id="PRO_0000057780" description="Protein phosphatase 2C 70">
    <location>
        <begin position="1"/>
        <end position="581"/>
    </location>
</feature>
<feature type="topological domain" description="Extracellular" evidence="2">
    <location>
        <begin position="1"/>
        <end position="7"/>
    </location>
</feature>
<feature type="transmembrane region" description="Helical" evidence="2">
    <location>
        <begin position="8"/>
        <end position="28"/>
    </location>
</feature>
<feature type="topological domain" description="Cytoplasmic" evidence="2">
    <location>
        <begin position="29"/>
        <end position="581"/>
    </location>
</feature>
<feature type="domain" description="FHA" evidence="3">
    <location>
        <begin position="208"/>
        <end position="259"/>
    </location>
</feature>
<feature type="domain" description="PPM-type phosphatase" evidence="4">
    <location>
        <begin position="304"/>
        <end position="577"/>
    </location>
</feature>
<feature type="binding site" evidence="1">
    <location>
        <position position="346"/>
    </location>
    <ligand>
        <name>Mn(2+)</name>
        <dbReference type="ChEBI" id="CHEBI:29035"/>
        <label>1</label>
    </ligand>
</feature>
<feature type="binding site" evidence="1">
    <location>
        <position position="346"/>
    </location>
    <ligand>
        <name>Mn(2+)</name>
        <dbReference type="ChEBI" id="CHEBI:29035"/>
        <label>2</label>
    </ligand>
</feature>
<feature type="binding site" evidence="1">
    <location>
        <position position="347"/>
    </location>
    <ligand>
        <name>Mn(2+)</name>
        <dbReference type="ChEBI" id="CHEBI:29035"/>
        <label>1</label>
    </ligand>
</feature>
<feature type="binding site" evidence="1">
    <location>
        <position position="521"/>
    </location>
    <ligand>
        <name>Mn(2+)</name>
        <dbReference type="ChEBI" id="CHEBI:29035"/>
        <label>2</label>
    </ligand>
</feature>
<feature type="binding site" evidence="1">
    <location>
        <position position="568"/>
    </location>
    <ligand>
        <name>Mn(2+)</name>
        <dbReference type="ChEBI" id="CHEBI:29035"/>
        <label>2</label>
    </ligand>
</feature>
<feature type="strand" evidence="12">
    <location>
        <begin position="180"/>
        <end position="186"/>
    </location>
</feature>
<feature type="strand" evidence="12">
    <location>
        <begin position="195"/>
        <end position="198"/>
    </location>
</feature>
<feature type="strand" evidence="12">
    <location>
        <begin position="207"/>
        <end position="215"/>
    </location>
</feature>
<feature type="strand" evidence="12">
    <location>
        <begin position="217"/>
        <end position="219"/>
    </location>
</feature>
<feature type="strand" evidence="12">
    <location>
        <begin position="225"/>
        <end position="235"/>
    </location>
</feature>
<feature type="turn" evidence="12">
    <location>
        <begin position="236"/>
        <end position="239"/>
    </location>
</feature>
<feature type="strand" evidence="12">
    <location>
        <begin position="240"/>
        <end position="245"/>
    </location>
</feature>
<feature type="strand" evidence="12">
    <location>
        <begin position="257"/>
        <end position="260"/>
    </location>
</feature>
<feature type="turn" evidence="12">
    <location>
        <begin position="264"/>
        <end position="266"/>
    </location>
</feature>
<feature type="strand" evidence="12">
    <location>
        <begin position="279"/>
        <end position="282"/>
    </location>
</feature>
<feature type="strand" evidence="12">
    <location>
        <begin position="284"/>
        <end position="286"/>
    </location>
</feature>
<feature type="strand" evidence="12">
    <location>
        <begin position="288"/>
        <end position="295"/>
    </location>
</feature>
<comment type="function">
    <text evidence="5 6 7 8 9">Dephosphorylates the Ser/Thr receptor-like kinase RLK5. May function as a signaling component in a pathway involving RLK5 (PubMed:15592873). Binds and dephosphorylates CLAVATA1 (CLV1). Functions as a negative regulator of the CLV1 signaling in plant development (PubMed:9294234, PubMed:9701578). Dephosphorylates SERK1 receptor kinase on threonine residues in the A-loop. Dephosphorylation of SERK1 controls SERK1 internalization (PubMed:12101128). Component of a signaling pathway which mediates adaptation to NaCl stress. Is not a component of the SALT OVERLY SENSITIVE (SOS) pathway (PubMed:18162596).</text>
</comment>
<comment type="catalytic activity">
    <reaction>
        <text>O-phospho-L-seryl-[protein] + H2O = L-seryl-[protein] + phosphate</text>
        <dbReference type="Rhea" id="RHEA:20629"/>
        <dbReference type="Rhea" id="RHEA-COMP:9863"/>
        <dbReference type="Rhea" id="RHEA-COMP:11604"/>
        <dbReference type="ChEBI" id="CHEBI:15377"/>
        <dbReference type="ChEBI" id="CHEBI:29999"/>
        <dbReference type="ChEBI" id="CHEBI:43474"/>
        <dbReference type="ChEBI" id="CHEBI:83421"/>
        <dbReference type="EC" id="3.1.3.16"/>
    </reaction>
</comment>
<comment type="catalytic activity">
    <reaction>
        <text>O-phospho-L-threonyl-[protein] + H2O = L-threonyl-[protein] + phosphate</text>
        <dbReference type="Rhea" id="RHEA:47004"/>
        <dbReference type="Rhea" id="RHEA-COMP:11060"/>
        <dbReference type="Rhea" id="RHEA-COMP:11605"/>
        <dbReference type="ChEBI" id="CHEBI:15377"/>
        <dbReference type="ChEBI" id="CHEBI:30013"/>
        <dbReference type="ChEBI" id="CHEBI:43474"/>
        <dbReference type="ChEBI" id="CHEBI:61977"/>
        <dbReference type="EC" id="3.1.3.16"/>
    </reaction>
</comment>
<comment type="cofactor">
    <cofactor evidence="1">
        <name>Mg(2+)</name>
        <dbReference type="ChEBI" id="CHEBI:18420"/>
    </cofactor>
    <cofactor evidence="1">
        <name>Mn(2+)</name>
        <dbReference type="ChEBI" id="CHEBI:29035"/>
    </cofactor>
    <text evidence="1">Binds 2 magnesium or manganese ions per subunit.</text>
</comment>
<comment type="subunit">
    <text evidence="6 8 9">Association of RLK5 with kapp domain is dependent on phosphorylation of RLK5 and can be abolished by dephosphorylation. Interacts with SERK1 and CDC48A. Component of the SERK1 signaling complex, composed of KAPP, CDC48A, GRF6 or GRF7, SERK1, SERK2, SERK3/BAK1 and BRI1 (PubMed:15592873). Interacts with CLV1 (PubMed:9294234, PubMed:9701578).</text>
</comment>
<comment type="interaction">
    <interactant intactId="EBI-1646157">
        <id>P46014</id>
    </interactant>
    <interactant intactId="EBI-1646111">
        <id>Q9SYQ8</id>
        <label>CLV1</label>
    </interactant>
    <organismsDiffer>false</organismsDiffer>
    <experiments>6</experiments>
</comment>
<comment type="interaction">
    <interactant intactId="EBI-1646157">
        <id>P46014</id>
    </interactant>
    <interactant intactId="EBI-2023993">
        <id>Q9C5S9</id>
        <label>CRK6</label>
    </interactant>
    <organismsDiffer>false</organismsDiffer>
    <experiments>2</experiments>
</comment>
<comment type="interaction">
    <interactant intactId="EBI-1646157">
        <id>P46014</id>
    </interactant>
    <interactant intactId="EBI-2015790">
        <id>O49974</id>
        <label>KIK1</label>
    </interactant>
    <organismsDiffer>true</organismsDiffer>
    <experiments>3</experiments>
</comment>
<comment type="subcellular location">
    <subcellularLocation>
        <location evidence="5">Cell membrane</location>
        <topology evidence="2">Single-pass type I membrane protein</topology>
    </subcellularLocation>
</comment>
<comment type="alternative products">
    <event type="alternative splicing"/>
    <isoform>
        <id>P46014-1</id>
        <name>1</name>
        <sequence type="displayed"/>
    </isoform>
    <text>A number of isoforms are produced. According to EST sequences.</text>
</comment>
<comment type="tissue specificity">
    <text>Expressed in all tissues examined.</text>
</comment>
<comment type="disruption phenotype">
    <text evidence="7">No visible phenotype under normal growth conditions, but mutant seedlings show increased sensitivity of roots to salt stress.</text>
</comment>
<dbReference type="EC" id="3.1.3.16"/>
<dbReference type="EMBL" id="U09505">
    <property type="protein sequence ID" value="AAB38148.1"/>
    <property type="molecule type" value="mRNA"/>
</dbReference>
<dbReference type="EMBL" id="AC069326">
    <property type="status" value="NOT_ANNOTATED_CDS"/>
    <property type="molecule type" value="Genomic_DNA"/>
</dbReference>
<dbReference type="EMBL" id="AF296837">
    <property type="status" value="NOT_ANNOTATED_CDS"/>
    <property type="molecule type" value="Genomic_DNA"/>
</dbReference>
<dbReference type="EMBL" id="CP002688">
    <property type="protein sequence ID" value="AED92679.1"/>
    <property type="molecule type" value="Genomic_DNA"/>
</dbReference>
<dbReference type="EMBL" id="AY045853">
    <property type="protein sequence ID" value="AAK76527.1"/>
    <property type="molecule type" value="mRNA"/>
</dbReference>
<dbReference type="EMBL" id="AY117152">
    <property type="protein sequence ID" value="AAM51227.1"/>
    <property type="molecule type" value="mRNA"/>
</dbReference>
<dbReference type="PIR" id="A55174">
    <property type="entry name" value="A55174"/>
</dbReference>
<dbReference type="RefSeq" id="NP_197429.1">
    <molecule id="P46014-1"/>
    <property type="nucleotide sequence ID" value="NM_121933.4"/>
</dbReference>
<dbReference type="PDB" id="1MZK">
    <property type="method" value="NMR"/>
    <property type="chains" value="A=180-313"/>
</dbReference>
<dbReference type="PDBsum" id="1MZK"/>
<dbReference type="BMRB" id="P46014"/>
<dbReference type="SMR" id="P46014"/>
<dbReference type="BioGRID" id="17324">
    <property type="interactions" value="13"/>
</dbReference>
<dbReference type="FunCoup" id="P46014">
    <property type="interactions" value="1720"/>
</dbReference>
<dbReference type="IntAct" id="P46014">
    <property type="interactions" value="15"/>
</dbReference>
<dbReference type="STRING" id="3702.P46014"/>
<dbReference type="iPTMnet" id="P46014"/>
<dbReference type="PaxDb" id="3702-AT5G19280.2"/>
<dbReference type="ProteomicsDB" id="250913">
    <molecule id="P46014-1"/>
</dbReference>
<dbReference type="EnsemblPlants" id="AT5G19280.1">
    <molecule id="P46014-1"/>
    <property type="protein sequence ID" value="AT5G19280.1"/>
    <property type="gene ID" value="AT5G19280"/>
</dbReference>
<dbReference type="GeneID" id="832048"/>
<dbReference type="Gramene" id="AT5G19280.1">
    <molecule id="P46014-1"/>
    <property type="protein sequence ID" value="AT5G19280.1"/>
    <property type="gene ID" value="AT5G19280"/>
</dbReference>
<dbReference type="KEGG" id="ath:AT5G19280"/>
<dbReference type="Araport" id="AT5G19280"/>
<dbReference type="TAIR" id="AT5G19280">
    <property type="gene designation" value="KAPP"/>
</dbReference>
<dbReference type="eggNOG" id="KOG0698">
    <property type="taxonomic scope" value="Eukaryota"/>
</dbReference>
<dbReference type="HOGENOM" id="CLU_033671_0_0_1"/>
<dbReference type="InParanoid" id="P46014"/>
<dbReference type="OMA" id="NHYYEGC"/>
<dbReference type="PhylomeDB" id="P46014"/>
<dbReference type="EvolutionaryTrace" id="P46014"/>
<dbReference type="PRO" id="PR:P46014"/>
<dbReference type="Proteomes" id="UP000006548">
    <property type="component" value="Chromosome 5"/>
</dbReference>
<dbReference type="ExpressionAtlas" id="P46014">
    <property type="expression patterns" value="baseline and differential"/>
</dbReference>
<dbReference type="GO" id="GO:0005886">
    <property type="term" value="C:plasma membrane"/>
    <property type="evidence" value="ECO:0000314"/>
    <property type="project" value="UniProtKB"/>
</dbReference>
<dbReference type="GO" id="GO:0050408">
    <property type="term" value="F:[pyruvate kinase]-phosphatase activity"/>
    <property type="evidence" value="ECO:0000314"/>
    <property type="project" value="UniProtKB"/>
</dbReference>
<dbReference type="GO" id="GO:0046872">
    <property type="term" value="F:metal ion binding"/>
    <property type="evidence" value="ECO:0007669"/>
    <property type="project" value="UniProtKB-KW"/>
</dbReference>
<dbReference type="GO" id="GO:0004722">
    <property type="term" value="F:protein serine/threonine phosphatase activity"/>
    <property type="evidence" value="ECO:0007669"/>
    <property type="project" value="UniProtKB-EC"/>
</dbReference>
<dbReference type="CDD" id="cd22678">
    <property type="entry name" value="FHA_PP2C70-like"/>
    <property type="match status" value="1"/>
</dbReference>
<dbReference type="CDD" id="cd00143">
    <property type="entry name" value="PP2Cc"/>
    <property type="match status" value="1"/>
</dbReference>
<dbReference type="DisProt" id="DP01355"/>
<dbReference type="FunFam" id="2.60.200.20:FF:000035">
    <property type="entry name" value="Protein phosphatase 2C 70"/>
    <property type="match status" value="1"/>
</dbReference>
<dbReference type="FunFam" id="3.60.40.10:FF:000047">
    <property type="entry name" value="Protein phosphatase 2C 70"/>
    <property type="match status" value="1"/>
</dbReference>
<dbReference type="Gene3D" id="2.60.200.20">
    <property type="match status" value="1"/>
</dbReference>
<dbReference type="Gene3D" id="3.60.40.10">
    <property type="entry name" value="PPM-type phosphatase domain"/>
    <property type="match status" value="1"/>
</dbReference>
<dbReference type="InterPro" id="IPR000253">
    <property type="entry name" value="FHA_dom"/>
</dbReference>
<dbReference type="InterPro" id="IPR016660">
    <property type="entry name" value="Kinase_assoc_Pase"/>
</dbReference>
<dbReference type="InterPro" id="IPR015655">
    <property type="entry name" value="PP2C"/>
</dbReference>
<dbReference type="InterPro" id="IPR000222">
    <property type="entry name" value="PP2C_BS"/>
</dbReference>
<dbReference type="InterPro" id="IPR036457">
    <property type="entry name" value="PPM-type-like_dom_sf"/>
</dbReference>
<dbReference type="InterPro" id="IPR001932">
    <property type="entry name" value="PPM-type_phosphatase-like_dom"/>
</dbReference>
<dbReference type="InterPro" id="IPR008984">
    <property type="entry name" value="SMAD_FHA_dom_sf"/>
</dbReference>
<dbReference type="PANTHER" id="PTHR13832">
    <property type="entry name" value="PROTEIN PHOSPHATASE 2C"/>
    <property type="match status" value="1"/>
</dbReference>
<dbReference type="PANTHER" id="PTHR13832:SF643">
    <property type="entry name" value="PROTEIN PHOSPHATASE 2C-RELATED"/>
    <property type="match status" value="1"/>
</dbReference>
<dbReference type="Pfam" id="PF00498">
    <property type="entry name" value="FHA"/>
    <property type="match status" value="1"/>
</dbReference>
<dbReference type="Pfam" id="PF00481">
    <property type="entry name" value="PP2C"/>
    <property type="match status" value="1"/>
</dbReference>
<dbReference type="PIRSF" id="PIRSF016465">
    <property type="entry name" value="Kap_phosphatase"/>
    <property type="match status" value="1"/>
</dbReference>
<dbReference type="SMART" id="SM00240">
    <property type="entry name" value="FHA"/>
    <property type="match status" value="1"/>
</dbReference>
<dbReference type="SMART" id="SM00332">
    <property type="entry name" value="PP2Cc"/>
    <property type="match status" value="1"/>
</dbReference>
<dbReference type="SUPFAM" id="SSF81606">
    <property type="entry name" value="PP2C-like"/>
    <property type="match status" value="1"/>
</dbReference>
<dbReference type="SUPFAM" id="SSF49879">
    <property type="entry name" value="SMAD/FHA domain"/>
    <property type="match status" value="1"/>
</dbReference>
<dbReference type="PROSITE" id="PS50006">
    <property type="entry name" value="FHA_DOMAIN"/>
    <property type="match status" value="1"/>
</dbReference>
<dbReference type="PROSITE" id="PS01032">
    <property type="entry name" value="PPM_1"/>
    <property type="match status" value="1"/>
</dbReference>
<dbReference type="PROSITE" id="PS51746">
    <property type="entry name" value="PPM_2"/>
    <property type="match status" value="1"/>
</dbReference>
<proteinExistence type="evidence at protein level"/>
<name>P2C70_ARATH</name>
<gene>
    <name evidence="11" type="primary">KAPP</name>
    <name evidence="10" type="synonym">RAG1</name>
    <name type="ordered locus">At5g19280</name>
    <name type="ORF">F7K24.30</name>
    <name type="ORF">T24G5.3</name>
</gene>
<evidence type="ECO:0000250" key="1"/>
<evidence type="ECO:0000255" key="2"/>
<evidence type="ECO:0000255" key="3">
    <source>
        <dbReference type="PROSITE-ProRule" id="PRU00086"/>
    </source>
</evidence>
<evidence type="ECO:0000255" key="4">
    <source>
        <dbReference type="PROSITE-ProRule" id="PRU01082"/>
    </source>
</evidence>
<evidence type="ECO:0000269" key="5">
    <source>
    </source>
</evidence>
<evidence type="ECO:0000269" key="6">
    <source>
    </source>
</evidence>
<evidence type="ECO:0000269" key="7">
    <source>
    </source>
</evidence>
<evidence type="ECO:0000269" key="8">
    <source>
    </source>
</evidence>
<evidence type="ECO:0000269" key="9">
    <source>
    </source>
</evidence>
<evidence type="ECO:0000303" key="10">
    <source>
    </source>
</evidence>
<evidence type="ECO:0000303" key="11">
    <source>
    </source>
</evidence>
<evidence type="ECO:0007829" key="12">
    <source>
        <dbReference type="PDB" id="1MZK"/>
    </source>
</evidence>
<keyword id="KW-0002">3D-structure</keyword>
<keyword id="KW-0025">Alternative splicing</keyword>
<keyword id="KW-1003">Cell membrane</keyword>
<keyword id="KW-0378">Hydrolase</keyword>
<keyword id="KW-0460">Magnesium</keyword>
<keyword id="KW-0464">Manganese</keyword>
<keyword id="KW-0472">Membrane</keyword>
<keyword id="KW-0479">Metal-binding</keyword>
<keyword id="KW-0904">Protein phosphatase</keyword>
<keyword id="KW-1185">Reference proteome</keyword>
<keyword id="KW-0735">Signal-anchor</keyword>
<keyword id="KW-0812">Transmembrane</keyword>
<keyword id="KW-1133">Transmembrane helix</keyword>
<accession>P46014</accession>
<organism>
    <name type="scientific">Arabidopsis thaliana</name>
    <name type="common">Mouse-ear cress</name>
    <dbReference type="NCBI Taxonomy" id="3702"/>
    <lineage>
        <taxon>Eukaryota</taxon>
        <taxon>Viridiplantae</taxon>
        <taxon>Streptophyta</taxon>
        <taxon>Embryophyta</taxon>
        <taxon>Tracheophyta</taxon>
        <taxon>Spermatophyta</taxon>
        <taxon>Magnoliopsida</taxon>
        <taxon>eudicotyledons</taxon>
        <taxon>Gunneridae</taxon>
        <taxon>Pentapetalae</taxon>
        <taxon>rosids</taxon>
        <taxon>malvids</taxon>
        <taxon>Brassicales</taxon>
        <taxon>Brassicaceae</taxon>
        <taxon>Camelineae</taxon>
        <taxon>Arabidopsis</taxon>
    </lineage>
</organism>
<reference key="1">
    <citation type="journal article" date="1994" name="Science">
        <title>Interaction of a protein phosphatase with an Arabidopsis serine-threonine receptor kinase.</title>
        <authorList>
            <person name="Stone J.M."/>
            <person name="Collinge M.A."/>
            <person name="Smith R.D."/>
            <person name="Horn M.A."/>
            <person name="Walker J.C."/>
        </authorList>
    </citation>
    <scope>NUCLEOTIDE SEQUENCE [MRNA]</scope>
</reference>
<reference key="2">
    <citation type="submission" date="1996-12" db="EMBL/GenBank/DDBJ databases">
        <authorList>
            <person name="Stone J.M."/>
        </authorList>
    </citation>
    <scope>SEQUENCE REVISION</scope>
</reference>
<reference key="3">
    <citation type="journal article" date="2000" name="Nature">
        <title>Sequence and analysis of chromosome 5 of the plant Arabidopsis thaliana.</title>
        <authorList>
            <person name="Tabata S."/>
            <person name="Kaneko T."/>
            <person name="Nakamura Y."/>
            <person name="Kotani H."/>
            <person name="Kato T."/>
            <person name="Asamizu E."/>
            <person name="Miyajima N."/>
            <person name="Sasamoto S."/>
            <person name="Kimura T."/>
            <person name="Hosouchi T."/>
            <person name="Kawashima K."/>
            <person name="Kohara M."/>
            <person name="Matsumoto M."/>
            <person name="Matsuno A."/>
            <person name="Muraki A."/>
            <person name="Nakayama S."/>
            <person name="Nakazaki N."/>
            <person name="Naruo K."/>
            <person name="Okumura S."/>
            <person name="Shinpo S."/>
            <person name="Takeuchi C."/>
            <person name="Wada T."/>
            <person name="Watanabe A."/>
            <person name="Yamada M."/>
            <person name="Yasuda M."/>
            <person name="Sato S."/>
            <person name="de la Bastide M."/>
            <person name="Huang E."/>
            <person name="Spiegel L."/>
            <person name="Gnoj L."/>
            <person name="O'Shaughnessy A."/>
            <person name="Preston R."/>
            <person name="Habermann K."/>
            <person name="Murray J."/>
            <person name="Johnson D."/>
            <person name="Rohlfing T."/>
            <person name="Nelson J."/>
            <person name="Stoneking T."/>
            <person name="Pepin K."/>
            <person name="Spieth J."/>
            <person name="Sekhon M."/>
            <person name="Armstrong J."/>
            <person name="Becker M."/>
            <person name="Belter E."/>
            <person name="Cordum H."/>
            <person name="Cordes M."/>
            <person name="Courtney L."/>
            <person name="Courtney W."/>
            <person name="Dante M."/>
            <person name="Du H."/>
            <person name="Edwards J."/>
            <person name="Fryman J."/>
            <person name="Haakensen B."/>
            <person name="Lamar E."/>
            <person name="Latreille P."/>
            <person name="Leonard S."/>
            <person name="Meyer R."/>
            <person name="Mulvaney E."/>
            <person name="Ozersky P."/>
            <person name="Riley A."/>
            <person name="Strowmatt C."/>
            <person name="Wagner-McPherson C."/>
            <person name="Wollam A."/>
            <person name="Yoakum M."/>
            <person name="Bell M."/>
            <person name="Dedhia N."/>
            <person name="Parnell L."/>
            <person name="Shah R."/>
            <person name="Rodriguez M."/>
            <person name="Hoon See L."/>
            <person name="Vil D."/>
            <person name="Baker J."/>
            <person name="Kirchoff K."/>
            <person name="Toth K."/>
            <person name="King L."/>
            <person name="Bahret A."/>
            <person name="Miller B."/>
            <person name="Marra M.A."/>
            <person name="Martienssen R."/>
            <person name="McCombie W.R."/>
            <person name="Wilson R.K."/>
            <person name="Murphy G."/>
            <person name="Bancroft I."/>
            <person name="Volckaert G."/>
            <person name="Wambutt R."/>
            <person name="Duesterhoeft A."/>
            <person name="Stiekema W."/>
            <person name="Pohl T."/>
            <person name="Entian K.-D."/>
            <person name="Terryn N."/>
            <person name="Hartley N."/>
            <person name="Bent E."/>
            <person name="Johnson S."/>
            <person name="Langham S.-A."/>
            <person name="McCullagh B."/>
            <person name="Robben J."/>
            <person name="Grymonprez B."/>
            <person name="Zimmermann W."/>
            <person name="Ramsperger U."/>
            <person name="Wedler H."/>
            <person name="Balke K."/>
            <person name="Wedler E."/>
            <person name="Peters S."/>
            <person name="van Staveren M."/>
            <person name="Dirkse W."/>
            <person name="Mooijman P."/>
            <person name="Klein Lankhorst R."/>
            <person name="Weitzenegger T."/>
            <person name="Bothe G."/>
            <person name="Rose M."/>
            <person name="Hauf J."/>
            <person name="Berneiser S."/>
            <person name="Hempel S."/>
            <person name="Feldpausch M."/>
            <person name="Lamberth S."/>
            <person name="Villarroel R."/>
            <person name="Gielen J."/>
            <person name="Ardiles W."/>
            <person name="Bents O."/>
            <person name="Lemcke K."/>
            <person name="Kolesov G."/>
            <person name="Mayer K.F.X."/>
            <person name="Rudd S."/>
            <person name="Schoof H."/>
            <person name="Schueller C."/>
            <person name="Zaccaria P."/>
            <person name="Mewes H.-W."/>
            <person name="Bevan M."/>
            <person name="Fransz P.F."/>
        </authorList>
    </citation>
    <scope>NUCLEOTIDE SEQUENCE [LARGE SCALE GENOMIC DNA]</scope>
    <source>
        <strain>cv. Columbia</strain>
    </source>
</reference>
<reference key="4">
    <citation type="journal article" date="2017" name="Plant J.">
        <title>Araport11: a complete reannotation of the Arabidopsis thaliana reference genome.</title>
        <authorList>
            <person name="Cheng C.Y."/>
            <person name="Krishnakumar V."/>
            <person name="Chan A.P."/>
            <person name="Thibaud-Nissen F."/>
            <person name="Schobel S."/>
            <person name="Town C.D."/>
        </authorList>
    </citation>
    <scope>GENOME REANNOTATION</scope>
    <source>
        <strain>cv. Columbia</strain>
    </source>
</reference>
<reference key="5">
    <citation type="journal article" date="2003" name="Science">
        <title>Empirical analysis of transcriptional activity in the Arabidopsis genome.</title>
        <authorList>
            <person name="Yamada K."/>
            <person name="Lim J."/>
            <person name="Dale J.M."/>
            <person name="Chen H."/>
            <person name="Shinn P."/>
            <person name="Palm C.J."/>
            <person name="Southwick A.M."/>
            <person name="Wu H.C."/>
            <person name="Kim C.J."/>
            <person name="Nguyen M."/>
            <person name="Pham P.K."/>
            <person name="Cheuk R.F."/>
            <person name="Karlin-Newmann G."/>
            <person name="Liu S.X."/>
            <person name="Lam B."/>
            <person name="Sakano H."/>
            <person name="Wu T."/>
            <person name="Yu G."/>
            <person name="Miranda M."/>
            <person name="Quach H.L."/>
            <person name="Tripp M."/>
            <person name="Chang C.H."/>
            <person name="Lee J.M."/>
            <person name="Toriumi M.J."/>
            <person name="Chan M.M."/>
            <person name="Tang C.C."/>
            <person name="Onodera C.S."/>
            <person name="Deng J.M."/>
            <person name="Akiyama K."/>
            <person name="Ansari Y."/>
            <person name="Arakawa T."/>
            <person name="Banh J."/>
            <person name="Banno F."/>
            <person name="Bowser L."/>
            <person name="Brooks S.Y."/>
            <person name="Carninci P."/>
            <person name="Chao Q."/>
            <person name="Choy N."/>
            <person name="Enju A."/>
            <person name="Goldsmith A.D."/>
            <person name="Gurjal M."/>
            <person name="Hansen N.F."/>
            <person name="Hayashizaki Y."/>
            <person name="Johnson-Hopson C."/>
            <person name="Hsuan V.W."/>
            <person name="Iida K."/>
            <person name="Karnes M."/>
            <person name="Khan S."/>
            <person name="Koesema E."/>
            <person name="Ishida J."/>
            <person name="Jiang P.X."/>
            <person name="Jones T."/>
            <person name="Kawai J."/>
            <person name="Kamiya A."/>
            <person name="Meyers C."/>
            <person name="Nakajima M."/>
            <person name="Narusaka M."/>
            <person name="Seki M."/>
            <person name="Sakurai T."/>
            <person name="Satou M."/>
            <person name="Tamse R."/>
            <person name="Vaysberg M."/>
            <person name="Wallender E.K."/>
            <person name="Wong C."/>
            <person name="Yamamura Y."/>
            <person name="Yuan S."/>
            <person name="Shinozaki K."/>
            <person name="Davis R.W."/>
            <person name="Theologis A."/>
            <person name="Ecker J.R."/>
        </authorList>
    </citation>
    <scope>NUCLEOTIDE SEQUENCE [LARGE SCALE MRNA]</scope>
    <source>
        <strain>cv. Columbia</strain>
    </source>
</reference>
<reference key="6">
    <citation type="journal article" date="1997" name="Proc. Natl. Acad. Sci. U.S.A.">
        <title>A possible role for kinase-associated protein phosphatase in the Arabidopsis CLAVATA1 signaling pathway.</title>
        <authorList>
            <person name="Williams R.W."/>
            <person name="Wilson J.M."/>
            <person name="Meyerowitz E.M."/>
        </authorList>
    </citation>
    <scope>FUNCTION</scope>
    <scope>INTERACTION WITH CVL1</scope>
</reference>
<reference key="7">
    <citation type="journal article" date="1998" name="Plant Physiol.">
        <title>Control of meristem development by CLAVATA1 receptor kinase and kinase-associated protein phosphatase interactions.</title>
        <authorList>
            <person name="Stone J.M."/>
            <person name="Trotochaud A.E."/>
            <person name="Walker J.C."/>
            <person name="Clark S.E."/>
        </authorList>
    </citation>
    <scope>FUNCTION</scope>
    <scope>INTERACTION WITH CVL1</scope>
</reference>
<reference key="8">
    <citation type="journal article" date="2002" name="Genes Dev.">
        <title>The Arabidopsis kinase-associated protein phosphatase controls internalization of the somatic embryogenesis receptor kinase 1.</title>
        <authorList>
            <person name="Shah K."/>
            <person name="Russinova E."/>
            <person name="Gadella T.W. Jr."/>
            <person name="Willemse J."/>
            <person name="de Vries S.C."/>
        </authorList>
    </citation>
    <scope>FUNCTION</scope>
    <scope>SUBCELLULAR LOCATION</scope>
</reference>
<reference key="9">
    <citation type="journal article" date="2005" name="Planta">
        <title>The Arabidopsis SERK1 protein interacts with the AAA-ATPase AtCDC48, the 14-3-3 protein GF14lambda and the PP2C phosphatase KAPP.</title>
        <authorList>
            <person name="Rienties I.M."/>
            <person name="Vink J."/>
            <person name="Borst J.W."/>
            <person name="Russinova E."/>
            <person name="de Vries S.C."/>
        </authorList>
    </citation>
    <scope>FUNCTION</scope>
    <scope>INTERACTION WITH SERK1 AND CDC48A</scope>
    <scope>IDENTIFICATION IN THE SERK1 COMPLEX</scope>
</reference>
<reference key="10">
    <citation type="journal article" date="2008" name="BMC Genomics">
        <title>Genome-wide and expression analysis of protein phosphatase 2C in rice and Arabidopsis.</title>
        <authorList>
            <person name="Xue T."/>
            <person name="Wang D."/>
            <person name="Zhang S."/>
            <person name="Ehlting J."/>
            <person name="Ni F."/>
            <person name="Jacab S."/>
            <person name="Zheng C."/>
            <person name="Zhong Y."/>
        </authorList>
    </citation>
    <scope>GENE FAMILY</scope>
    <scope>NOMENCLATURE</scope>
</reference>
<reference key="11">
    <citation type="journal article" date="2008" name="Plant Physiol.">
        <title>The Arabidopsis kinase-associated protein phosphatase regulates adaptation to Na+ stress.</title>
        <authorList>
            <person name="Manabe Y."/>
            <person name="Bressan R.A."/>
            <person name="Wang T."/>
            <person name="Li F."/>
            <person name="Koiwa H."/>
            <person name="Sokolchik I."/>
            <person name="Li X."/>
            <person name="Maggio A."/>
        </authorList>
    </citation>
    <scope>FUNCTION</scope>
    <scope>DISRUPTION PHENOTYPE</scope>
</reference>
<reference key="12">
    <citation type="journal article" date="2003" name="Proc. Natl. Acad. Sci. U.S.A.">
        <title>NMR structure of the forkhead-associated domain from the Arabidopsis receptor kinase-associated protein phosphatase.</title>
        <authorList>
            <person name="Lee G.I."/>
            <person name="Ding Z."/>
            <person name="Walker J.C."/>
            <person name="Van Doren S.R."/>
        </authorList>
    </citation>
    <scope>STRUCTURE BY NMR OF 175-313</scope>
</reference>
<protein>
    <recommendedName>
        <fullName>Protein phosphatase 2C 70</fullName>
        <shortName>AtPP2C70</shortName>
        <ecNumber>3.1.3.16</ecNumber>
    </recommendedName>
    <alternativeName>
        <fullName evidence="11">Kinase-associated protein phosphatase</fullName>
    </alternativeName>
    <alternativeName>
        <fullName evidence="10">Protein ROOT ATTENUATED GROWTH 1</fullName>
    </alternativeName>
</protein>
<sequence length="581" mass="64911">MAMIGMNIIGLFMVLMLLLISLIILFACKPWRYFSRFRSSSRFSSTFKVGDLQRPLISDDGNLIQGQTSEVTREYDLEGACYQNDGLLHSSLTEGRFYKQRLPSSSPHFSQGESFVLEVISEPSDNALVGQTLKLPAEKGSLAEVQTYDWQNNRNENLQYNLEKDRLINLSPRLVEDQRSWLFLEVIAGPAIGLQHAVNSTSSSKLPVKLGRVSPSDLALKDSEVSGKHAQITWNSTKFKWELVDMGSLNGTLVNSHSISHPDLGSRKWGNPVELASDDIITLGTTTKVYVRISSQNEFQIPFKIGVASDPMAMRRGGRKLPMEDVCHYKWPLPGANKFGLFCVCDGHGGSGAAQSAIKIIPEVLANILSDSLRKEKVLSKRDASDVLRDMFAKTEARLEEHQYEGCTATVLLVWKDNEENFFAQCANLGDSACVIHLGGRYIQMTEDHRVVSLSERKRFQEAGLALRDGETRLFGINLARMLGDKFPKQQDSRFSAEPYISEPLRIDQSSKDVFAVLASDGLWDVVSPKKAVQLVLQMRDKERGRESSAEKIANGLLNEARAMRTKDNTSIIYLDFDTSL</sequence>